<gene>
    <name evidence="1" type="primary">rpl21e</name>
    <name type="ordered locus">Tneu_1568</name>
</gene>
<comment type="similarity">
    <text evidence="1">Belongs to the eukaryotic ribosomal protein eL21 family.</text>
</comment>
<dbReference type="EMBL" id="CP001014">
    <property type="protein sequence ID" value="ACB40492.1"/>
    <property type="molecule type" value="Genomic_DNA"/>
</dbReference>
<dbReference type="RefSeq" id="WP_012350911.1">
    <property type="nucleotide sequence ID" value="NC_010525.1"/>
</dbReference>
<dbReference type="SMR" id="B1Y9U2"/>
<dbReference type="STRING" id="444157.Tneu_1568"/>
<dbReference type="GeneID" id="6166229"/>
<dbReference type="KEGG" id="tne:Tneu_1568"/>
<dbReference type="eggNOG" id="arCOG04129">
    <property type="taxonomic scope" value="Archaea"/>
</dbReference>
<dbReference type="HOGENOM" id="CLU_103610_1_1_2"/>
<dbReference type="OrthoDB" id="6295at2157"/>
<dbReference type="Proteomes" id="UP000001694">
    <property type="component" value="Chromosome"/>
</dbReference>
<dbReference type="GO" id="GO:1990904">
    <property type="term" value="C:ribonucleoprotein complex"/>
    <property type="evidence" value="ECO:0007669"/>
    <property type="project" value="UniProtKB-KW"/>
</dbReference>
<dbReference type="GO" id="GO:0005840">
    <property type="term" value="C:ribosome"/>
    <property type="evidence" value="ECO:0007669"/>
    <property type="project" value="UniProtKB-KW"/>
</dbReference>
<dbReference type="GO" id="GO:0003735">
    <property type="term" value="F:structural constituent of ribosome"/>
    <property type="evidence" value="ECO:0007669"/>
    <property type="project" value="InterPro"/>
</dbReference>
<dbReference type="GO" id="GO:0006412">
    <property type="term" value="P:translation"/>
    <property type="evidence" value="ECO:0007669"/>
    <property type="project" value="UniProtKB-UniRule"/>
</dbReference>
<dbReference type="FunFam" id="2.30.30.70:FF:000001">
    <property type="entry name" value="60S ribosomal protein L21"/>
    <property type="match status" value="1"/>
</dbReference>
<dbReference type="Gene3D" id="2.30.30.70">
    <property type="entry name" value="Ribosomal protein L21"/>
    <property type="match status" value="1"/>
</dbReference>
<dbReference type="HAMAP" id="MF_00369">
    <property type="entry name" value="Ribosomal_eL21"/>
    <property type="match status" value="1"/>
</dbReference>
<dbReference type="InterPro" id="IPR001147">
    <property type="entry name" value="Ribosomal_eL21"/>
</dbReference>
<dbReference type="InterPro" id="IPR022856">
    <property type="entry name" value="Ribosomal_eL21_arc"/>
</dbReference>
<dbReference type="InterPro" id="IPR018259">
    <property type="entry name" value="Ribosomal_eL21_CS"/>
</dbReference>
<dbReference type="InterPro" id="IPR036948">
    <property type="entry name" value="Ribosomal_eL21_sf"/>
</dbReference>
<dbReference type="InterPro" id="IPR008991">
    <property type="entry name" value="Translation_prot_SH3-like_sf"/>
</dbReference>
<dbReference type="NCBIfam" id="NF003303">
    <property type="entry name" value="PRK04306.1"/>
    <property type="match status" value="1"/>
</dbReference>
<dbReference type="PANTHER" id="PTHR20981">
    <property type="entry name" value="60S RIBOSOMAL PROTEIN L21"/>
    <property type="match status" value="1"/>
</dbReference>
<dbReference type="Pfam" id="PF01157">
    <property type="entry name" value="Ribosomal_L21e"/>
    <property type="match status" value="1"/>
</dbReference>
<dbReference type="SUPFAM" id="SSF50104">
    <property type="entry name" value="Translation proteins SH3-like domain"/>
    <property type="match status" value="1"/>
</dbReference>
<dbReference type="PROSITE" id="PS01171">
    <property type="entry name" value="RIBOSOMAL_L21E"/>
    <property type="match status" value="1"/>
</dbReference>
<protein>
    <recommendedName>
        <fullName evidence="1">Large ribosomal subunit protein eL21</fullName>
    </recommendedName>
    <alternativeName>
        <fullName evidence="3">50S ribosomal protein L21e</fullName>
    </alternativeName>
</protein>
<proteinExistence type="inferred from homology"/>
<evidence type="ECO:0000255" key="1">
    <source>
        <dbReference type="HAMAP-Rule" id="MF_00369"/>
    </source>
</evidence>
<evidence type="ECO:0000256" key="2">
    <source>
        <dbReference type="SAM" id="MobiDB-lite"/>
    </source>
</evidence>
<evidence type="ECO:0000305" key="3"/>
<keyword id="KW-0687">Ribonucleoprotein</keyword>
<keyword id="KW-0689">Ribosomal protein</keyword>
<reference key="1">
    <citation type="submission" date="2008-03" db="EMBL/GenBank/DDBJ databases">
        <title>Complete sequence of Thermoproteus neutrophilus V24Sta.</title>
        <authorList>
            <consortium name="US DOE Joint Genome Institute"/>
            <person name="Copeland A."/>
            <person name="Lucas S."/>
            <person name="Lapidus A."/>
            <person name="Glavina del Rio T."/>
            <person name="Dalin E."/>
            <person name="Tice H."/>
            <person name="Bruce D."/>
            <person name="Goodwin L."/>
            <person name="Pitluck S."/>
            <person name="Sims D."/>
            <person name="Brettin T."/>
            <person name="Detter J.C."/>
            <person name="Han C."/>
            <person name="Kuske C.R."/>
            <person name="Schmutz J."/>
            <person name="Larimer F."/>
            <person name="Land M."/>
            <person name="Hauser L."/>
            <person name="Kyrpides N."/>
            <person name="Mikhailova N."/>
            <person name="Biddle J.F."/>
            <person name="Zhang Z."/>
            <person name="Fitz-Gibbon S.T."/>
            <person name="Lowe T.M."/>
            <person name="Saltikov C."/>
            <person name="House C.H."/>
            <person name="Richardson P."/>
        </authorList>
    </citation>
    <scope>NUCLEOTIDE SEQUENCE [LARGE SCALE GENOMIC DNA]</scope>
    <source>
        <strain>DSM 2338 / JCM 9278 / NBRC 100436 / V24Sta</strain>
    </source>
</reference>
<feature type="chain" id="PRO_1000121517" description="Large ribosomal subunit protein eL21">
    <location>
        <begin position="1"/>
        <end position="100"/>
    </location>
</feature>
<feature type="region of interest" description="Disordered" evidence="2">
    <location>
        <begin position="1"/>
        <end position="22"/>
    </location>
</feature>
<feature type="compositionally biased region" description="Basic residues" evidence="2">
    <location>
        <begin position="1"/>
        <end position="21"/>
    </location>
</feature>
<accession>B1Y9U2</accession>
<name>RL21_PYRNV</name>
<sequence length="100" mass="11453">MVKRTHGYRYKSRKLLRKKPRERGMSGLSRLLYEYKPGDKVVIDIDPTYITTAPHRRYQGKVGVVVGTRGRAYVIETYLGDKKKIVITTADHLVPYQGGS</sequence>
<organism>
    <name type="scientific">Pyrobaculum neutrophilum (strain DSM 2338 / JCM 9278 / NBRC 100436 / V24Sta)</name>
    <name type="common">Thermoproteus neutrophilus</name>
    <dbReference type="NCBI Taxonomy" id="444157"/>
    <lineage>
        <taxon>Archaea</taxon>
        <taxon>Thermoproteota</taxon>
        <taxon>Thermoprotei</taxon>
        <taxon>Thermoproteales</taxon>
        <taxon>Thermoproteaceae</taxon>
        <taxon>Pyrobaculum</taxon>
    </lineage>
</organism>